<keyword id="KW-0012">Acyltransferase</keyword>
<keyword id="KW-0963">Cytoplasm</keyword>
<keyword id="KW-1185">Reference proteome</keyword>
<keyword id="KW-0808">Transferase</keyword>
<feature type="chain" id="PRO_0000062807" description="Octanoyltransferase">
    <location>
        <begin position="1"/>
        <end position="268"/>
    </location>
</feature>
<feature type="domain" description="BPL/LPL catalytic" evidence="2">
    <location>
        <begin position="73"/>
        <end position="261"/>
    </location>
</feature>
<feature type="active site" description="Acyl-thioester intermediate" evidence="1">
    <location>
        <position position="223"/>
    </location>
</feature>
<feature type="binding site" evidence="1">
    <location>
        <begin position="112"/>
        <end position="119"/>
    </location>
    <ligand>
        <name>substrate</name>
    </ligand>
</feature>
<feature type="binding site" evidence="1">
    <location>
        <begin position="192"/>
        <end position="194"/>
    </location>
    <ligand>
        <name>substrate</name>
    </ligand>
</feature>
<feature type="binding site" evidence="1">
    <location>
        <begin position="205"/>
        <end position="207"/>
    </location>
    <ligand>
        <name>substrate</name>
    </ligand>
</feature>
<feature type="site" description="Lowers pKa of active site Cys" evidence="1">
    <location>
        <position position="189"/>
    </location>
</feature>
<comment type="function">
    <text evidence="1">Catalyzes the transfer of endogenously produced octanoic acid from octanoyl-acyl-carrier-protein onto the lipoyl domains of lipoate-dependent enzymes. Lipoyl-ACP can also act as a substrate although octanoyl-ACP is likely to be the physiological substrate.</text>
</comment>
<comment type="catalytic activity">
    <reaction evidence="1">
        <text>octanoyl-[ACP] + L-lysyl-[protein] = N(6)-octanoyl-L-lysyl-[protein] + holo-[ACP] + H(+)</text>
        <dbReference type="Rhea" id="RHEA:17665"/>
        <dbReference type="Rhea" id="RHEA-COMP:9636"/>
        <dbReference type="Rhea" id="RHEA-COMP:9685"/>
        <dbReference type="Rhea" id="RHEA-COMP:9752"/>
        <dbReference type="Rhea" id="RHEA-COMP:9928"/>
        <dbReference type="ChEBI" id="CHEBI:15378"/>
        <dbReference type="ChEBI" id="CHEBI:29969"/>
        <dbReference type="ChEBI" id="CHEBI:64479"/>
        <dbReference type="ChEBI" id="CHEBI:78463"/>
        <dbReference type="ChEBI" id="CHEBI:78809"/>
        <dbReference type="EC" id="2.3.1.181"/>
    </reaction>
</comment>
<comment type="pathway">
    <text evidence="1">Protein modification; protein lipoylation via endogenous pathway; protein N(6)-(lipoyl)lysine from octanoyl-[acyl-carrier-protein]: step 1/2.</text>
</comment>
<comment type="subcellular location">
    <subcellularLocation>
        <location evidence="1">Cytoplasm</location>
    </subcellularLocation>
</comment>
<comment type="miscellaneous">
    <text evidence="1">In the reaction, the free carboxyl group of octanoic acid is attached via an amide linkage to the epsilon-amino group of a specific lysine residue of lipoyl domains of lipoate-dependent enzymes.</text>
</comment>
<comment type="similarity">
    <text evidence="1">Belongs to the LipB family.</text>
</comment>
<comment type="sequence caution" evidence="3">
    <conflict type="erroneous initiation">
        <sequence resource="EMBL-CDS" id="AAK87341"/>
    </conflict>
    <text>Truncated N-terminus.</text>
</comment>
<organism>
    <name type="scientific">Agrobacterium fabrum (strain C58 / ATCC 33970)</name>
    <name type="common">Agrobacterium tumefaciens (strain C58)</name>
    <dbReference type="NCBI Taxonomy" id="176299"/>
    <lineage>
        <taxon>Bacteria</taxon>
        <taxon>Pseudomonadati</taxon>
        <taxon>Pseudomonadota</taxon>
        <taxon>Alphaproteobacteria</taxon>
        <taxon>Hyphomicrobiales</taxon>
        <taxon>Rhizobiaceae</taxon>
        <taxon>Rhizobium/Agrobacterium group</taxon>
        <taxon>Agrobacterium</taxon>
        <taxon>Agrobacterium tumefaciens complex</taxon>
    </lineage>
</organism>
<dbReference type="EC" id="2.3.1.181" evidence="1"/>
<dbReference type="EMBL" id="AE007869">
    <property type="protein sequence ID" value="AAK87341.2"/>
    <property type="status" value="ALT_INIT"/>
    <property type="molecule type" value="Genomic_DNA"/>
</dbReference>
<dbReference type="PIR" id="AB2768">
    <property type="entry name" value="AB2768"/>
</dbReference>
<dbReference type="PIR" id="D97548">
    <property type="entry name" value="D97548"/>
</dbReference>
<dbReference type="RefSeq" id="NP_354556.2">
    <property type="nucleotide sequence ID" value="NC_003062.2"/>
</dbReference>
<dbReference type="SMR" id="Q8UF44"/>
<dbReference type="STRING" id="176299.Atu1556"/>
<dbReference type="EnsemblBacteria" id="AAK87341">
    <property type="protein sequence ID" value="AAK87341"/>
    <property type="gene ID" value="Atu1556"/>
</dbReference>
<dbReference type="KEGG" id="atu:Atu1556"/>
<dbReference type="PATRIC" id="fig|176299.10.peg.1579"/>
<dbReference type="eggNOG" id="COG0321">
    <property type="taxonomic scope" value="Bacteria"/>
</dbReference>
<dbReference type="HOGENOM" id="CLU_035168_3_0_5"/>
<dbReference type="OrthoDB" id="9787061at2"/>
<dbReference type="UniPathway" id="UPA00538">
    <property type="reaction ID" value="UER00592"/>
</dbReference>
<dbReference type="Proteomes" id="UP000000813">
    <property type="component" value="Chromosome circular"/>
</dbReference>
<dbReference type="GO" id="GO:0005737">
    <property type="term" value="C:cytoplasm"/>
    <property type="evidence" value="ECO:0007669"/>
    <property type="project" value="UniProtKB-SubCell"/>
</dbReference>
<dbReference type="GO" id="GO:0033819">
    <property type="term" value="F:lipoyl(octanoyl) transferase activity"/>
    <property type="evidence" value="ECO:0007669"/>
    <property type="project" value="UniProtKB-EC"/>
</dbReference>
<dbReference type="GO" id="GO:0036211">
    <property type="term" value="P:protein modification process"/>
    <property type="evidence" value="ECO:0007669"/>
    <property type="project" value="InterPro"/>
</dbReference>
<dbReference type="CDD" id="cd16444">
    <property type="entry name" value="LipB"/>
    <property type="match status" value="1"/>
</dbReference>
<dbReference type="FunFam" id="3.30.930.10:FF:000159">
    <property type="entry name" value="Octanoyltransferase"/>
    <property type="match status" value="1"/>
</dbReference>
<dbReference type="Gene3D" id="3.30.930.10">
    <property type="entry name" value="Bira Bifunctional Protein, Domain 2"/>
    <property type="match status" value="1"/>
</dbReference>
<dbReference type="HAMAP" id="MF_00013">
    <property type="entry name" value="LipB"/>
    <property type="match status" value="1"/>
</dbReference>
<dbReference type="InterPro" id="IPR045864">
    <property type="entry name" value="aa-tRNA-synth_II/BPL/LPL"/>
</dbReference>
<dbReference type="InterPro" id="IPR004143">
    <property type="entry name" value="BPL_LPL_catalytic"/>
</dbReference>
<dbReference type="InterPro" id="IPR000544">
    <property type="entry name" value="Octanoyltransferase"/>
</dbReference>
<dbReference type="InterPro" id="IPR020605">
    <property type="entry name" value="Octanoyltransferase_CS"/>
</dbReference>
<dbReference type="NCBIfam" id="TIGR00214">
    <property type="entry name" value="lipB"/>
    <property type="match status" value="1"/>
</dbReference>
<dbReference type="NCBIfam" id="NF010921">
    <property type="entry name" value="PRK14341.1"/>
    <property type="match status" value="1"/>
</dbReference>
<dbReference type="NCBIfam" id="NF010925">
    <property type="entry name" value="PRK14345.1"/>
    <property type="match status" value="1"/>
</dbReference>
<dbReference type="PANTHER" id="PTHR10993:SF7">
    <property type="entry name" value="LIPOYLTRANSFERASE 2, MITOCHONDRIAL-RELATED"/>
    <property type="match status" value="1"/>
</dbReference>
<dbReference type="PANTHER" id="PTHR10993">
    <property type="entry name" value="OCTANOYLTRANSFERASE"/>
    <property type="match status" value="1"/>
</dbReference>
<dbReference type="Pfam" id="PF21948">
    <property type="entry name" value="LplA-B_cat"/>
    <property type="match status" value="1"/>
</dbReference>
<dbReference type="SUPFAM" id="SSF55681">
    <property type="entry name" value="Class II aaRS and biotin synthetases"/>
    <property type="match status" value="1"/>
</dbReference>
<dbReference type="PROSITE" id="PS51733">
    <property type="entry name" value="BPL_LPL_CATALYTIC"/>
    <property type="match status" value="1"/>
</dbReference>
<dbReference type="PROSITE" id="PS01313">
    <property type="entry name" value="LIPB"/>
    <property type="match status" value="1"/>
</dbReference>
<proteinExistence type="inferred from homology"/>
<evidence type="ECO:0000255" key="1">
    <source>
        <dbReference type="HAMAP-Rule" id="MF_00013"/>
    </source>
</evidence>
<evidence type="ECO:0000255" key="2">
    <source>
        <dbReference type="PROSITE-ProRule" id="PRU01067"/>
    </source>
</evidence>
<evidence type="ECO:0000305" key="3"/>
<gene>
    <name evidence="1" type="primary">lipB</name>
    <name type="ordered locus">Atu1556</name>
    <name type="ORF">AGR_C_2865</name>
</gene>
<name>LIPB_AGRFC</name>
<accession>Q8UF44</accession>
<protein>
    <recommendedName>
        <fullName evidence="1">Octanoyltransferase</fullName>
        <ecNumber evidence="1">2.3.1.181</ecNumber>
    </recommendedName>
    <alternativeName>
        <fullName evidence="1">Lipoate-protein ligase B</fullName>
    </alternativeName>
    <alternativeName>
        <fullName evidence="1">Lipoyl/octanoyl transferase</fullName>
    </alternativeName>
    <alternativeName>
        <fullName evidence="1">Octanoyl-[acyl-carrier-protein]-protein N-octanoyltransferase</fullName>
    </alternativeName>
</protein>
<sequence length="268" mass="29426">MQEARKCWGCGLVAILREGCGKDFFMLTRTDIETNMFPAAGSPPVRWRISEGLVAYGQAVEEMEREVAAIAAGEADELVWLLEHPPLYTAGTSADVADLIEPDRFPVFATGRGGEYTYHGPGQRVVYVMLDLKRRRQDVRAYVAALEDVIIRTLDKMNVRGERREDRVGVWVRRPEKPLLPDGGMAEDKIAALGIRLRKWVSFHGLSINVDPDLSHFSGIVPCGISAYGVTSLVDLGLPVMIGDVDVLLREAFEEVFGPAVPETGAGG</sequence>
<reference key="1">
    <citation type="journal article" date="2001" name="Science">
        <title>The genome of the natural genetic engineer Agrobacterium tumefaciens C58.</title>
        <authorList>
            <person name="Wood D.W."/>
            <person name="Setubal J.C."/>
            <person name="Kaul R."/>
            <person name="Monks D.E."/>
            <person name="Kitajima J.P."/>
            <person name="Okura V.K."/>
            <person name="Zhou Y."/>
            <person name="Chen L."/>
            <person name="Wood G.E."/>
            <person name="Almeida N.F. Jr."/>
            <person name="Woo L."/>
            <person name="Chen Y."/>
            <person name="Paulsen I.T."/>
            <person name="Eisen J.A."/>
            <person name="Karp P.D."/>
            <person name="Bovee D. Sr."/>
            <person name="Chapman P."/>
            <person name="Clendenning J."/>
            <person name="Deatherage G."/>
            <person name="Gillet W."/>
            <person name="Grant C."/>
            <person name="Kutyavin T."/>
            <person name="Levy R."/>
            <person name="Li M.-J."/>
            <person name="McClelland E."/>
            <person name="Palmieri A."/>
            <person name="Raymond C."/>
            <person name="Rouse G."/>
            <person name="Saenphimmachak C."/>
            <person name="Wu Z."/>
            <person name="Romero P."/>
            <person name="Gordon D."/>
            <person name="Zhang S."/>
            <person name="Yoo H."/>
            <person name="Tao Y."/>
            <person name="Biddle P."/>
            <person name="Jung M."/>
            <person name="Krespan W."/>
            <person name="Perry M."/>
            <person name="Gordon-Kamm B."/>
            <person name="Liao L."/>
            <person name="Kim S."/>
            <person name="Hendrick C."/>
            <person name="Zhao Z.-Y."/>
            <person name="Dolan M."/>
            <person name="Chumley F."/>
            <person name="Tingey S.V."/>
            <person name="Tomb J.-F."/>
            <person name="Gordon M.P."/>
            <person name="Olson M.V."/>
            <person name="Nester E.W."/>
        </authorList>
    </citation>
    <scope>NUCLEOTIDE SEQUENCE [LARGE SCALE GENOMIC DNA]</scope>
    <source>
        <strain>C58 / ATCC 33970</strain>
    </source>
</reference>
<reference key="2">
    <citation type="journal article" date="2001" name="Science">
        <title>Genome sequence of the plant pathogen and biotechnology agent Agrobacterium tumefaciens C58.</title>
        <authorList>
            <person name="Goodner B."/>
            <person name="Hinkle G."/>
            <person name="Gattung S."/>
            <person name="Miller N."/>
            <person name="Blanchard M."/>
            <person name="Qurollo B."/>
            <person name="Goldman B.S."/>
            <person name="Cao Y."/>
            <person name="Askenazi M."/>
            <person name="Halling C."/>
            <person name="Mullin L."/>
            <person name="Houmiel K."/>
            <person name="Gordon J."/>
            <person name="Vaudin M."/>
            <person name="Iartchouk O."/>
            <person name="Epp A."/>
            <person name="Liu F."/>
            <person name="Wollam C."/>
            <person name="Allinger M."/>
            <person name="Doughty D."/>
            <person name="Scott C."/>
            <person name="Lappas C."/>
            <person name="Markelz B."/>
            <person name="Flanagan C."/>
            <person name="Crowell C."/>
            <person name="Gurson J."/>
            <person name="Lomo C."/>
            <person name="Sear C."/>
            <person name="Strub G."/>
            <person name="Cielo C."/>
            <person name="Slater S."/>
        </authorList>
    </citation>
    <scope>NUCLEOTIDE SEQUENCE [LARGE SCALE GENOMIC DNA]</scope>
    <source>
        <strain>C58 / ATCC 33970</strain>
    </source>
</reference>